<gene>
    <name type="primary">rbsR</name>
    <name type="ordered locus">c4681</name>
</gene>
<protein>
    <recommendedName>
        <fullName>Ribose operon repressor</fullName>
    </recommendedName>
</protein>
<keyword id="KW-0238">DNA-binding</keyword>
<keyword id="KW-1185">Reference proteome</keyword>
<keyword id="KW-0678">Repressor</keyword>
<keyword id="KW-0804">Transcription</keyword>
<keyword id="KW-0805">Transcription regulation</keyword>
<organism>
    <name type="scientific">Escherichia coli O6:H1 (strain CFT073 / ATCC 700928 / UPEC)</name>
    <dbReference type="NCBI Taxonomy" id="199310"/>
    <lineage>
        <taxon>Bacteria</taxon>
        <taxon>Pseudomonadati</taxon>
        <taxon>Pseudomonadota</taxon>
        <taxon>Gammaproteobacteria</taxon>
        <taxon>Enterobacterales</taxon>
        <taxon>Enterobacteriaceae</taxon>
        <taxon>Escherichia</taxon>
    </lineage>
</organism>
<accession>P0ACQ1</accession>
<accession>P25551</accession>
<reference key="1">
    <citation type="journal article" date="2002" name="Proc. Natl. Acad. Sci. U.S.A.">
        <title>Extensive mosaic structure revealed by the complete genome sequence of uropathogenic Escherichia coli.</title>
        <authorList>
            <person name="Welch R.A."/>
            <person name="Burland V."/>
            <person name="Plunkett G. III"/>
            <person name="Redford P."/>
            <person name="Roesch P."/>
            <person name="Rasko D."/>
            <person name="Buckles E.L."/>
            <person name="Liou S.-R."/>
            <person name="Boutin A."/>
            <person name="Hackett J."/>
            <person name="Stroud D."/>
            <person name="Mayhew G.F."/>
            <person name="Rose D.J."/>
            <person name="Zhou S."/>
            <person name="Schwartz D.C."/>
            <person name="Perna N.T."/>
            <person name="Mobley H.L.T."/>
            <person name="Donnenberg M.S."/>
            <person name="Blattner F.R."/>
        </authorList>
    </citation>
    <scope>NUCLEOTIDE SEQUENCE [LARGE SCALE GENOMIC DNA]</scope>
    <source>
        <strain>CFT073 / ATCC 700928 / UPEC</strain>
    </source>
</reference>
<proteinExistence type="inferred from homology"/>
<feature type="initiator methionine" description="Removed" evidence="1">
    <location>
        <position position="1"/>
    </location>
</feature>
<feature type="chain" id="PRO_0000107987" description="Ribose operon repressor">
    <location>
        <begin position="2"/>
        <end position="330"/>
    </location>
</feature>
<feature type="domain" description="HTH lacI-type" evidence="2">
    <location>
        <begin position="2"/>
        <end position="56"/>
    </location>
</feature>
<feature type="DNA-binding region" description="H-T-H motif" evidence="2">
    <location>
        <begin position="4"/>
        <end position="23"/>
    </location>
</feature>
<evidence type="ECO:0000250" key="1"/>
<evidence type="ECO:0000255" key="2">
    <source>
        <dbReference type="PROSITE-ProRule" id="PRU00111"/>
    </source>
</evidence>
<dbReference type="EMBL" id="AE014075">
    <property type="protein sequence ID" value="AAN83113.1"/>
    <property type="molecule type" value="Genomic_DNA"/>
</dbReference>
<dbReference type="RefSeq" id="WP_000224470.1">
    <property type="nucleotide sequence ID" value="NZ_CP051263.1"/>
</dbReference>
<dbReference type="SMR" id="P0ACQ1"/>
<dbReference type="STRING" id="199310.c4681"/>
<dbReference type="GeneID" id="75173987"/>
<dbReference type="KEGG" id="ecc:c4681"/>
<dbReference type="eggNOG" id="COG1609">
    <property type="taxonomic scope" value="Bacteria"/>
</dbReference>
<dbReference type="HOGENOM" id="CLU_037628_6_2_6"/>
<dbReference type="BioCyc" id="ECOL199310:C4681-MONOMER"/>
<dbReference type="Proteomes" id="UP000001410">
    <property type="component" value="Chromosome"/>
</dbReference>
<dbReference type="GO" id="GO:0003700">
    <property type="term" value="F:DNA-binding transcription factor activity"/>
    <property type="evidence" value="ECO:0007669"/>
    <property type="project" value="TreeGrafter"/>
</dbReference>
<dbReference type="GO" id="GO:0000976">
    <property type="term" value="F:transcription cis-regulatory region binding"/>
    <property type="evidence" value="ECO:0007669"/>
    <property type="project" value="TreeGrafter"/>
</dbReference>
<dbReference type="CDD" id="cd01392">
    <property type="entry name" value="HTH_LacI"/>
    <property type="match status" value="1"/>
</dbReference>
<dbReference type="CDD" id="cd06275">
    <property type="entry name" value="PBP1_PurR"/>
    <property type="match status" value="1"/>
</dbReference>
<dbReference type="FunFam" id="1.10.260.40:FF:000002">
    <property type="entry name" value="HTH-type transcriptional repressor PurR"/>
    <property type="match status" value="1"/>
</dbReference>
<dbReference type="Gene3D" id="3.40.50.2300">
    <property type="match status" value="2"/>
</dbReference>
<dbReference type="Gene3D" id="1.10.260.40">
    <property type="entry name" value="lambda repressor-like DNA-binding domains"/>
    <property type="match status" value="1"/>
</dbReference>
<dbReference type="InterPro" id="IPR000843">
    <property type="entry name" value="HTH_LacI"/>
</dbReference>
<dbReference type="InterPro" id="IPR046335">
    <property type="entry name" value="LacI/GalR-like_sensor"/>
</dbReference>
<dbReference type="InterPro" id="IPR010982">
    <property type="entry name" value="Lambda_DNA-bd_dom_sf"/>
</dbReference>
<dbReference type="InterPro" id="IPR028082">
    <property type="entry name" value="Peripla_BP_I"/>
</dbReference>
<dbReference type="NCBIfam" id="NF007743">
    <property type="entry name" value="PRK10423.1"/>
    <property type="match status" value="1"/>
</dbReference>
<dbReference type="PANTHER" id="PTHR30146">
    <property type="entry name" value="LACI-RELATED TRANSCRIPTIONAL REPRESSOR"/>
    <property type="match status" value="1"/>
</dbReference>
<dbReference type="PANTHER" id="PTHR30146:SF145">
    <property type="entry name" value="RIBOSE OPERON REPRESSOR"/>
    <property type="match status" value="1"/>
</dbReference>
<dbReference type="Pfam" id="PF00356">
    <property type="entry name" value="LacI"/>
    <property type="match status" value="1"/>
</dbReference>
<dbReference type="Pfam" id="PF13377">
    <property type="entry name" value="Peripla_BP_3"/>
    <property type="match status" value="1"/>
</dbReference>
<dbReference type="PRINTS" id="PR00036">
    <property type="entry name" value="HTHLACI"/>
</dbReference>
<dbReference type="SMART" id="SM00354">
    <property type="entry name" value="HTH_LACI"/>
    <property type="match status" value="1"/>
</dbReference>
<dbReference type="SUPFAM" id="SSF47413">
    <property type="entry name" value="lambda repressor-like DNA-binding domains"/>
    <property type="match status" value="1"/>
</dbReference>
<dbReference type="SUPFAM" id="SSF53822">
    <property type="entry name" value="Periplasmic binding protein-like I"/>
    <property type="match status" value="1"/>
</dbReference>
<dbReference type="PROSITE" id="PS00356">
    <property type="entry name" value="HTH_LACI_1"/>
    <property type="match status" value="1"/>
</dbReference>
<dbReference type="PROSITE" id="PS50932">
    <property type="entry name" value="HTH_LACI_2"/>
    <property type="match status" value="1"/>
</dbReference>
<comment type="function">
    <text evidence="1">Transcriptional repressor for the ribose rbsDACBK operon. RbsR binds to a region of perfect dyad symmetry spanning the rbs operon transcriptional start site. The affinity for the rbs operator is reduced by addition of ribose, consistent with ribose being the inducer of the operon (By similarity).</text>
</comment>
<sequence>MATMKDVARLAGVSTSTVSHVINKDRFVSEAITAKVEAAIKELNYAPSALARSLKLNQTHTIGMLITASTNPFYSELVRGVERSCFERGYSLVLCNTEGDEQRMNRNLETLMQKRVDGLLLLCTETHQPSREIMQRYPTVPTVMMDWAPFDGDSDLIQDNSLLGGDLATQYLIDKGHTRIACITGPLDKTPARLRLEGYRAAMKRAGLNIPDGYEVTGDFEFNGGFDAMRQLLSHPLRPQAVFTGNDAMAVGVYQALYQAELQVPQDIAVIGYDDIELASFMTPPLTTIHQPKDELGELAIDVLIHRITQPTLQQQRLQLTPILMERGSA</sequence>
<name>RBSR_ECOL6</name>